<proteinExistence type="inferred from homology"/>
<feature type="chain" id="PRO_0000231534" description="Deoxyribose-phosphate aldolase">
    <location>
        <begin position="1"/>
        <end position="220"/>
    </location>
</feature>
<feature type="active site" description="Proton donor/acceptor" evidence="1">
    <location>
        <position position="89"/>
    </location>
</feature>
<feature type="active site" description="Schiff-base intermediate with acetaldehyde" evidence="1">
    <location>
        <position position="151"/>
    </location>
</feature>
<feature type="active site" description="Proton donor/acceptor" evidence="1">
    <location>
        <position position="180"/>
    </location>
</feature>
<dbReference type="EC" id="4.1.2.4" evidence="1"/>
<dbReference type="EMBL" id="BX842656">
    <property type="protein sequence ID" value="CAE81211.1"/>
    <property type="molecule type" value="Genomic_DNA"/>
</dbReference>
<dbReference type="RefSeq" id="WP_011166154.1">
    <property type="nucleotide sequence ID" value="NC_005363.1"/>
</dbReference>
<dbReference type="SMR" id="Q6MGR8"/>
<dbReference type="STRING" id="264462.Bd3854"/>
<dbReference type="GeneID" id="93014623"/>
<dbReference type="KEGG" id="bba:Bd3854"/>
<dbReference type="eggNOG" id="COG0274">
    <property type="taxonomic scope" value="Bacteria"/>
</dbReference>
<dbReference type="HOGENOM" id="CLU_053595_0_1_7"/>
<dbReference type="UniPathway" id="UPA00002">
    <property type="reaction ID" value="UER00468"/>
</dbReference>
<dbReference type="Proteomes" id="UP000008080">
    <property type="component" value="Chromosome"/>
</dbReference>
<dbReference type="GO" id="GO:0005737">
    <property type="term" value="C:cytoplasm"/>
    <property type="evidence" value="ECO:0007669"/>
    <property type="project" value="UniProtKB-SubCell"/>
</dbReference>
<dbReference type="GO" id="GO:0004139">
    <property type="term" value="F:deoxyribose-phosphate aldolase activity"/>
    <property type="evidence" value="ECO:0007669"/>
    <property type="project" value="UniProtKB-UniRule"/>
</dbReference>
<dbReference type="GO" id="GO:0006018">
    <property type="term" value="P:2-deoxyribose 1-phosphate catabolic process"/>
    <property type="evidence" value="ECO:0007669"/>
    <property type="project" value="UniProtKB-UniRule"/>
</dbReference>
<dbReference type="GO" id="GO:0016052">
    <property type="term" value="P:carbohydrate catabolic process"/>
    <property type="evidence" value="ECO:0007669"/>
    <property type="project" value="TreeGrafter"/>
</dbReference>
<dbReference type="GO" id="GO:0009264">
    <property type="term" value="P:deoxyribonucleotide catabolic process"/>
    <property type="evidence" value="ECO:0007669"/>
    <property type="project" value="InterPro"/>
</dbReference>
<dbReference type="CDD" id="cd00959">
    <property type="entry name" value="DeoC"/>
    <property type="match status" value="1"/>
</dbReference>
<dbReference type="FunFam" id="3.20.20.70:FF:000044">
    <property type="entry name" value="Deoxyribose-phosphate aldolase"/>
    <property type="match status" value="1"/>
</dbReference>
<dbReference type="Gene3D" id="3.20.20.70">
    <property type="entry name" value="Aldolase class I"/>
    <property type="match status" value="1"/>
</dbReference>
<dbReference type="HAMAP" id="MF_00114">
    <property type="entry name" value="DeoC_type1"/>
    <property type="match status" value="1"/>
</dbReference>
<dbReference type="InterPro" id="IPR013785">
    <property type="entry name" value="Aldolase_TIM"/>
</dbReference>
<dbReference type="InterPro" id="IPR011343">
    <property type="entry name" value="DeoC"/>
</dbReference>
<dbReference type="InterPro" id="IPR002915">
    <property type="entry name" value="DeoC/FbaB/LacD_aldolase"/>
</dbReference>
<dbReference type="InterPro" id="IPR028581">
    <property type="entry name" value="DeoC_typeI"/>
</dbReference>
<dbReference type="NCBIfam" id="TIGR00126">
    <property type="entry name" value="deoC"/>
    <property type="match status" value="1"/>
</dbReference>
<dbReference type="PANTHER" id="PTHR10889">
    <property type="entry name" value="DEOXYRIBOSE-PHOSPHATE ALDOLASE"/>
    <property type="match status" value="1"/>
</dbReference>
<dbReference type="PANTHER" id="PTHR10889:SF1">
    <property type="entry name" value="DEOXYRIBOSE-PHOSPHATE ALDOLASE"/>
    <property type="match status" value="1"/>
</dbReference>
<dbReference type="Pfam" id="PF01791">
    <property type="entry name" value="DeoC"/>
    <property type="match status" value="1"/>
</dbReference>
<dbReference type="PIRSF" id="PIRSF001357">
    <property type="entry name" value="DeoC"/>
    <property type="match status" value="1"/>
</dbReference>
<dbReference type="SMART" id="SM01133">
    <property type="entry name" value="DeoC"/>
    <property type="match status" value="1"/>
</dbReference>
<dbReference type="SUPFAM" id="SSF51569">
    <property type="entry name" value="Aldolase"/>
    <property type="match status" value="1"/>
</dbReference>
<organism>
    <name type="scientific">Bdellovibrio bacteriovorus (strain ATCC 15356 / DSM 50701 / NCIMB 9529 / HD100)</name>
    <dbReference type="NCBI Taxonomy" id="264462"/>
    <lineage>
        <taxon>Bacteria</taxon>
        <taxon>Pseudomonadati</taxon>
        <taxon>Bdellovibrionota</taxon>
        <taxon>Bdellovibrionia</taxon>
        <taxon>Bdellovibrionales</taxon>
        <taxon>Pseudobdellovibrionaceae</taxon>
        <taxon>Bdellovibrio</taxon>
    </lineage>
</organism>
<sequence>MQLSRYIDHTLLKPEAQTAQIEKLCAEAKEHNFFSVCVNTSYVKTCAELLKDSSVKVCCVVGFPLGAMDTTSKAFETKTAIANGAQEIDMVIQIGALKDRRLDYVRDDIKAVVQAANGHTVKVIIETSLLNQEDKTLACKAALEAGAHFVKTSTGFGGGGATVDDVKLMKSVVGSSMEVKASGGIKDAQQAKSMIDAGATRLGTSSGITIIQGGSVQGGY</sequence>
<keyword id="KW-0963">Cytoplasm</keyword>
<keyword id="KW-0456">Lyase</keyword>
<keyword id="KW-1185">Reference proteome</keyword>
<keyword id="KW-0704">Schiff base</keyword>
<evidence type="ECO:0000255" key="1">
    <source>
        <dbReference type="HAMAP-Rule" id="MF_00114"/>
    </source>
</evidence>
<reference key="1">
    <citation type="journal article" date="2004" name="Science">
        <title>A predator unmasked: life cycle of Bdellovibrio bacteriovorus from a genomic perspective.</title>
        <authorList>
            <person name="Rendulic S."/>
            <person name="Jagtap P."/>
            <person name="Rosinus A."/>
            <person name="Eppinger M."/>
            <person name="Baar C."/>
            <person name="Lanz C."/>
            <person name="Keller H."/>
            <person name="Lambert C."/>
            <person name="Evans K.J."/>
            <person name="Goesmann A."/>
            <person name="Meyer F."/>
            <person name="Sockett R.E."/>
            <person name="Schuster S.C."/>
        </authorList>
    </citation>
    <scope>NUCLEOTIDE SEQUENCE [LARGE SCALE GENOMIC DNA]</scope>
    <source>
        <strain>ATCC 15356 / DSM 50701 / NCIMB 9529 / HD100</strain>
    </source>
</reference>
<protein>
    <recommendedName>
        <fullName evidence="1">Deoxyribose-phosphate aldolase</fullName>
        <shortName evidence="1">DERA</shortName>
        <ecNumber evidence="1">4.1.2.4</ecNumber>
    </recommendedName>
    <alternativeName>
        <fullName evidence="1">2-deoxy-D-ribose 5-phosphate aldolase</fullName>
    </alternativeName>
    <alternativeName>
        <fullName evidence="1">Phosphodeoxyriboaldolase</fullName>
        <shortName evidence="1">Deoxyriboaldolase</shortName>
    </alternativeName>
</protein>
<comment type="function">
    <text evidence="1">Catalyzes a reversible aldol reaction between acetaldehyde and D-glyceraldehyde 3-phosphate to generate 2-deoxy-D-ribose 5-phosphate.</text>
</comment>
<comment type="catalytic activity">
    <reaction evidence="1">
        <text>2-deoxy-D-ribose 5-phosphate = D-glyceraldehyde 3-phosphate + acetaldehyde</text>
        <dbReference type="Rhea" id="RHEA:12821"/>
        <dbReference type="ChEBI" id="CHEBI:15343"/>
        <dbReference type="ChEBI" id="CHEBI:59776"/>
        <dbReference type="ChEBI" id="CHEBI:62877"/>
        <dbReference type="EC" id="4.1.2.4"/>
    </reaction>
</comment>
<comment type="pathway">
    <text evidence="1">Carbohydrate degradation; 2-deoxy-D-ribose 1-phosphate degradation; D-glyceraldehyde 3-phosphate and acetaldehyde from 2-deoxy-alpha-D-ribose 1-phosphate: step 2/2.</text>
</comment>
<comment type="subcellular location">
    <subcellularLocation>
        <location evidence="1">Cytoplasm</location>
    </subcellularLocation>
</comment>
<comment type="similarity">
    <text evidence="1">Belongs to the DeoC/FbaB aldolase family. DeoC type 1 subfamily.</text>
</comment>
<name>DEOC_BDEBA</name>
<accession>Q6MGR8</accession>
<gene>
    <name evidence="1" type="primary">deoC</name>
    <name type="synonym">dra</name>
    <name type="ordered locus">Bd3854</name>
</gene>